<gene>
    <name evidence="1" type="primary">rnz</name>
    <name type="ordered locus">SYNW0538</name>
</gene>
<feature type="chain" id="PRO_0000155915" description="Ribonuclease Z">
    <location>
        <begin position="1"/>
        <end position="319"/>
    </location>
</feature>
<feature type="active site" description="Proton acceptor" evidence="1">
    <location>
        <position position="66"/>
    </location>
</feature>
<feature type="binding site" evidence="1">
    <location>
        <position position="62"/>
    </location>
    <ligand>
        <name>Zn(2+)</name>
        <dbReference type="ChEBI" id="CHEBI:29105"/>
        <label>1</label>
        <note>catalytic</note>
    </ligand>
</feature>
<feature type="binding site" evidence="1">
    <location>
        <position position="64"/>
    </location>
    <ligand>
        <name>Zn(2+)</name>
        <dbReference type="ChEBI" id="CHEBI:29105"/>
        <label>1</label>
        <note>catalytic</note>
    </ligand>
</feature>
<feature type="binding site" evidence="1">
    <location>
        <position position="66"/>
    </location>
    <ligand>
        <name>Zn(2+)</name>
        <dbReference type="ChEBI" id="CHEBI:29105"/>
        <label>2</label>
        <note>catalytic</note>
    </ligand>
</feature>
<feature type="binding site" evidence="1">
    <location>
        <position position="67"/>
    </location>
    <ligand>
        <name>Zn(2+)</name>
        <dbReference type="ChEBI" id="CHEBI:29105"/>
        <label>2</label>
        <note>catalytic</note>
    </ligand>
</feature>
<feature type="binding site" evidence="1">
    <location>
        <position position="145"/>
    </location>
    <ligand>
        <name>Zn(2+)</name>
        <dbReference type="ChEBI" id="CHEBI:29105"/>
        <label>1</label>
        <note>catalytic</note>
    </ligand>
</feature>
<feature type="binding site" evidence="1">
    <location>
        <position position="216"/>
    </location>
    <ligand>
        <name>Zn(2+)</name>
        <dbReference type="ChEBI" id="CHEBI:29105"/>
        <label>1</label>
        <note>catalytic</note>
    </ligand>
</feature>
<feature type="binding site" evidence="1">
    <location>
        <position position="216"/>
    </location>
    <ligand>
        <name>Zn(2+)</name>
        <dbReference type="ChEBI" id="CHEBI:29105"/>
        <label>2</label>
        <note>catalytic</note>
    </ligand>
</feature>
<feature type="binding site" evidence="1">
    <location>
        <position position="274"/>
    </location>
    <ligand>
        <name>Zn(2+)</name>
        <dbReference type="ChEBI" id="CHEBI:29105"/>
        <label>2</label>
        <note>catalytic</note>
    </ligand>
</feature>
<sequence length="319" mass="34514">MQVTFLGTSSGVPTRARNVSAVALRLPQRSEMWLFDCGEGTQHQFLRSDLRLSQLRRVFVTHMHGDHVFGLPGLLASLGLSGSCQDGVDLYGPDPLESFLKGALNTSSTRIGYPLQVHRSRPAAEQGTLLFEDDELTVRCTPLTHRVPAYAYRVDQKPLAGRFDIDKARSLGIPPGPVYAQLKRGESVTLEDGRVIDGTTLCGPERPGVSVMICTDTVFCDAAVELARGVDLLIHESTFAHAEAEMAFQKQHSTSTMAAQTAAEAGVGQLAITHLSPRYVPGNPVSPDDLLKEAQAIFPNTVLAKDFLSLDVKPCCNSS</sequence>
<proteinExistence type="inferred from homology"/>
<accession>Q7U8S4</accession>
<dbReference type="EC" id="3.1.26.11" evidence="1"/>
<dbReference type="EMBL" id="BX569690">
    <property type="protein sequence ID" value="CAE07053.1"/>
    <property type="molecule type" value="Genomic_DNA"/>
</dbReference>
<dbReference type="RefSeq" id="WP_011127407.1">
    <property type="nucleotide sequence ID" value="NC_005070.1"/>
</dbReference>
<dbReference type="SMR" id="Q7U8S4"/>
<dbReference type="STRING" id="84588.SYNW0538"/>
<dbReference type="KEGG" id="syw:SYNW0538"/>
<dbReference type="eggNOG" id="COG1234">
    <property type="taxonomic scope" value="Bacteria"/>
</dbReference>
<dbReference type="HOGENOM" id="CLU_031317_2_0_3"/>
<dbReference type="Proteomes" id="UP000001422">
    <property type="component" value="Chromosome"/>
</dbReference>
<dbReference type="GO" id="GO:0042781">
    <property type="term" value="F:3'-tRNA processing endoribonuclease activity"/>
    <property type="evidence" value="ECO:0007669"/>
    <property type="project" value="UniProtKB-UniRule"/>
</dbReference>
<dbReference type="GO" id="GO:0008270">
    <property type="term" value="F:zinc ion binding"/>
    <property type="evidence" value="ECO:0007669"/>
    <property type="project" value="UniProtKB-UniRule"/>
</dbReference>
<dbReference type="CDD" id="cd07717">
    <property type="entry name" value="RNaseZ_ZiPD-like_MBL-fold"/>
    <property type="match status" value="1"/>
</dbReference>
<dbReference type="FunFam" id="3.60.15.10:FF:000002">
    <property type="entry name" value="Ribonuclease Z"/>
    <property type="match status" value="1"/>
</dbReference>
<dbReference type="Gene3D" id="3.60.15.10">
    <property type="entry name" value="Ribonuclease Z/Hydroxyacylglutathione hydrolase-like"/>
    <property type="match status" value="1"/>
</dbReference>
<dbReference type="HAMAP" id="MF_01818">
    <property type="entry name" value="RNase_Z_BN"/>
    <property type="match status" value="1"/>
</dbReference>
<dbReference type="InterPro" id="IPR001279">
    <property type="entry name" value="Metallo-B-lactamas"/>
</dbReference>
<dbReference type="InterPro" id="IPR036866">
    <property type="entry name" value="RibonucZ/Hydroxyglut_hydro"/>
</dbReference>
<dbReference type="InterPro" id="IPR013471">
    <property type="entry name" value="RNase_Z/BN"/>
</dbReference>
<dbReference type="NCBIfam" id="NF000801">
    <property type="entry name" value="PRK00055.1-3"/>
    <property type="match status" value="1"/>
</dbReference>
<dbReference type="NCBIfam" id="TIGR02651">
    <property type="entry name" value="RNase_Z"/>
    <property type="match status" value="1"/>
</dbReference>
<dbReference type="PANTHER" id="PTHR46018">
    <property type="entry name" value="ZINC PHOSPHODIESTERASE ELAC PROTEIN 1"/>
    <property type="match status" value="1"/>
</dbReference>
<dbReference type="PANTHER" id="PTHR46018:SF2">
    <property type="entry name" value="ZINC PHOSPHODIESTERASE ELAC PROTEIN 1"/>
    <property type="match status" value="1"/>
</dbReference>
<dbReference type="Pfam" id="PF12706">
    <property type="entry name" value="Lactamase_B_2"/>
    <property type="match status" value="1"/>
</dbReference>
<dbReference type="SUPFAM" id="SSF56281">
    <property type="entry name" value="Metallo-hydrolase/oxidoreductase"/>
    <property type="match status" value="1"/>
</dbReference>
<name>RNZ_PARMW</name>
<organism>
    <name type="scientific">Parasynechococcus marenigrum (strain WH8102)</name>
    <dbReference type="NCBI Taxonomy" id="84588"/>
    <lineage>
        <taxon>Bacteria</taxon>
        <taxon>Bacillati</taxon>
        <taxon>Cyanobacteriota</taxon>
        <taxon>Cyanophyceae</taxon>
        <taxon>Synechococcales</taxon>
        <taxon>Prochlorococcaceae</taxon>
        <taxon>Parasynechococcus</taxon>
        <taxon>Parasynechococcus marenigrum</taxon>
    </lineage>
</organism>
<comment type="function">
    <text evidence="1">Zinc phosphodiesterase, which displays some tRNA 3'-processing endonuclease activity. Probably involved in tRNA maturation, by removing a 3'-trailer from precursor tRNA.</text>
</comment>
<comment type="catalytic activity">
    <reaction evidence="1">
        <text>Endonucleolytic cleavage of RNA, removing extra 3' nucleotides from tRNA precursor, generating 3' termini of tRNAs. A 3'-hydroxy group is left at the tRNA terminus and a 5'-phosphoryl group is left at the trailer molecule.</text>
        <dbReference type="EC" id="3.1.26.11"/>
    </reaction>
</comment>
<comment type="cofactor">
    <cofactor evidence="1">
        <name>Zn(2+)</name>
        <dbReference type="ChEBI" id="CHEBI:29105"/>
    </cofactor>
    <text evidence="1">Binds 2 Zn(2+) ions.</text>
</comment>
<comment type="subunit">
    <text evidence="1">Homodimer.</text>
</comment>
<comment type="similarity">
    <text evidence="1">Belongs to the RNase Z family.</text>
</comment>
<keyword id="KW-0255">Endonuclease</keyword>
<keyword id="KW-0378">Hydrolase</keyword>
<keyword id="KW-0479">Metal-binding</keyword>
<keyword id="KW-0540">Nuclease</keyword>
<keyword id="KW-0819">tRNA processing</keyword>
<keyword id="KW-0862">Zinc</keyword>
<reference key="1">
    <citation type="journal article" date="2003" name="Nature">
        <title>The genome of a motile marine Synechococcus.</title>
        <authorList>
            <person name="Palenik B."/>
            <person name="Brahamsha B."/>
            <person name="Larimer F.W."/>
            <person name="Land M.L."/>
            <person name="Hauser L."/>
            <person name="Chain P."/>
            <person name="Lamerdin J.E."/>
            <person name="Regala W."/>
            <person name="Allen E.E."/>
            <person name="McCarren J."/>
            <person name="Paulsen I.T."/>
            <person name="Dufresne A."/>
            <person name="Partensky F."/>
            <person name="Webb E.A."/>
            <person name="Waterbury J."/>
        </authorList>
    </citation>
    <scope>NUCLEOTIDE SEQUENCE [LARGE SCALE GENOMIC DNA]</scope>
    <source>
        <strain>WH8102</strain>
    </source>
</reference>
<evidence type="ECO:0000255" key="1">
    <source>
        <dbReference type="HAMAP-Rule" id="MF_01818"/>
    </source>
</evidence>
<protein>
    <recommendedName>
        <fullName evidence="1">Ribonuclease Z</fullName>
        <shortName evidence="1">RNase Z</shortName>
        <ecNumber evidence="1">3.1.26.11</ecNumber>
    </recommendedName>
    <alternativeName>
        <fullName evidence="1">tRNA 3 endonuclease</fullName>
    </alternativeName>
    <alternativeName>
        <fullName evidence="1">tRNase Z</fullName>
    </alternativeName>
</protein>